<dbReference type="EMBL" id="GQ884177">
    <property type="protein sequence ID" value="ADI95408.1"/>
    <property type="molecule type" value="Genomic_DNA"/>
</dbReference>
<dbReference type="EMBL" id="DQ157469">
    <property type="protein sequence ID" value="ABA10820.1"/>
    <property type="molecule type" value="Genomic_DNA"/>
</dbReference>
<dbReference type="EMBL" id="CP003734">
    <property type="protein sequence ID" value="AFO50108.1"/>
    <property type="status" value="ALT_INIT"/>
    <property type="molecule type" value="Genomic_DNA"/>
</dbReference>
<dbReference type="RefSeq" id="WP_012052589.1">
    <property type="nucleotide sequence ID" value="NC_018220.1"/>
</dbReference>
<dbReference type="SMR" id="Q9KWV3"/>
<dbReference type="TCDB" id="2.A.6.2.10">
    <property type="family name" value="the resistance-nodulation-cell division (rnd) superfamily"/>
</dbReference>
<dbReference type="KEGG" id="ppx:T1E_4279"/>
<dbReference type="PATRIC" id="fig|1196325.3.peg.4236"/>
<dbReference type="HOGENOM" id="CLU_012817_13_3_6"/>
<dbReference type="Proteomes" id="UP000006503">
    <property type="component" value="Chromosome"/>
</dbReference>
<dbReference type="GO" id="GO:0009279">
    <property type="term" value="C:cell outer membrane"/>
    <property type="evidence" value="ECO:0007669"/>
    <property type="project" value="UniProtKB-SubCell"/>
</dbReference>
<dbReference type="GO" id="GO:0015562">
    <property type="term" value="F:efflux transmembrane transporter activity"/>
    <property type="evidence" value="ECO:0007669"/>
    <property type="project" value="InterPro"/>
</dbReference>
<dbReference type="Gene3D" id="1.20.1600.10">
    <property type="entry name" value="Outer membrane efflux proteins (OEP)"/>
    <property type="match status" value="1"/>
</dbReference>
<dbReference type="Gene3D" id="2.20.200.10">
    <property type="entry name" value="Outer membrane efflux proteins (OEP)"/>
    <property type="match status" value="1"/>
</dbReference>
<dbReference type="InterPro" id="IPR050737">
    <property type="entry name" value="OMF"/>
</dbReference>
<dbReference type="InterPro" id="IPR003423">
    <property type="entry name" value="OMP_efflux"/>
</dbReference>
<dbReference type="InterPro" id="IPR010131">
    <property type="entry name" value="RND_efflux_OM_lipoprot_NodT"/>
</dbReference>
<dbReference type="NCBIfam" id="TIGR01845">
    <property type="entry name" value="outer_NodT"/>
    <property type="match status" value="1"/>
</dbReference>
<dbReference type="PANTHER" id="PTHR30203:SF32">
    <property type="entry name" value="CATION EFFLUX SYSTEM PROTEIN CUSC"/>
    <property type="match status" value="1"/>
</dbReference>
<dbReference type="PANTHER" id="PTHR30203">
    <property type="entry name" value="OUTER MEMBRANE CATION EFFLUX PROTEIN"/>
    <property type="match status" value="1"/>
</dbReference>
<dbReference type="Pfam" id="PF02321">
    <property type="entry name" value="OEP"/>
    <property type="match status" value="2"/>
</dbReference>
<dbReference type="SUPFAM" id="SSF56954">
    <property type="entry name" value="Outer membrane efflux proteins (OEP)"/>
    <property type="match status" value="1"/>
</dbReference>
<dbReference type="PROSITE" id="PS51257">
    <property type="entry name" value="PROKAR_LIPOPROTEIN"/>
    <property type="match status" value="1"/>
</dbReference>
<name>TTGF_PSEPT</name>
<sequence>MKTHYLSIALSVALSGCSLIPDYQRPPAPIQAGWPQGEAYAKLKAGTHRPSQTRDAELNWQVFFRDPVMRELIATALNNNRDLRQTALNVEAYRALHRIERSALLPRANTGVGATRQRLPADLSPTGEAGIQSQYDTTLSMSYELDMFGRLRSLERAALQEYLAAAETQRSMQIALIADVAIAYLSWRSDQAQLDLARSTLASYENSLNLIKSSREVGTASALDVRQARSLVETARVQQTLYTRQVAQDMNALQLLLGTKLPADLPISDVLDQPLAALSTGLPADLLLHRPDIRAAEHRLLAANANIGAARAAFFPSITLTAAAGTASHELDGLFEGGSGLWAFMPRINLPIFTAGRLRGNLDYRNVIKDINVAEYEKSIQTAFREVADGLAARGTFGEQLQAQRDLVDNNQAYYKLAYQRYDEGVDNYLAVLDAQRELFAAQQQFLSDRLNQLSSEVRLFKALGGGWDNISSQPLTAQN</sequence>
<gene>
    <name type="primary">ttgF</name>
    <name type="synonym">sepC</name>
    <name type="ordered locus">T1E_4279</name>
</gene>
<protein>
    <recommendedName>
        <fullName>Toluene efflux pump outer membrane protein TtgF</fullName>
    </recommendedName>
</protein>
<comment type="function">
    <text>The outer membrane component of an inducible organic solvent efflux pump. Involved in export of toluene and styrene but not of m-xylene, propylbenzene or ethylbenzene. Is not involved in antibiotic or AMP efflux.</text>
</comment>
<comment type="subcellular location">
    <subcellularLocation>
        <location evidence="4">Cell outer membrane</location>
        <topology evidence="1">Lipid-anchor</topology>
    </subcellularLocation>
</comment>
<comment type="induction">
    <text evidence="2 3">The ttgDEF operon is induced in the presence of toluene and styrene, but not m-xylene.</text>
</comment>
<comment type="similarity">
    <text evidence="4">Belongs to the outer membrane factor (OMF) (TC 1.B.17) family.</text>
</comment>
<comment type="sequence caution" evidence="4">
    <conflict type="erroneous initiation">
        <sequence resource="EMBL-CDS" id="AFO50108"/>
    </conflict>
    <text>Truncated N-terminus.</text>
</comment>
<accession>Q9KWV3</accession>
<accession>I7BEK2</accession>
<accession>Q3LWR5</accession>
<reference key="1">
    <citation type="journal article" date="2000" name="J. Bacteriol.">
        <title>A set of genes encoding a second toluene efflux system in Pseudomonas putida DOT-T1 is linked to the tod genes for toluene metabolism.</title>
        <authorList>
            <person name="Mosqueda G."/>
            <person name="Ramos J.L."/>
        </authorList>
    </citation>
    <scope>NUCLEOTIDE SEQUENCE [GENOMIC DNA]</scope>
    <scope>INDUCTION</scope>
    <source>
        <strain>DOT-T1E</strain>
    </source>
</reference>
<reference key="2">
    <citation type="journal article" date="2001" name="Mol. Microbiol.">
        <title>Global and cognate regulators control the expression of the organic solvent efflux pumps TtgABC and TtgDEF of Pseudomonas putida.</title>
        <authorList>
            <person name="Duque E."/>
            <person name="Segura A."/>
            <person name="Mosqueda G."/>
            <person name="Ramos J.L."/>
        </authorList>
    </citation>
    <scope>NUCLEOTIDE SEQUENCE [GENOMIC DNA]</scope>
    <scope>INDUCTION</scope>
    <source>
        <strain>DOT-T1E</strain>
    </source>
</reference>
<reference key="3">
    <citation type="submission" date="2002-12" db="EMBL/GenBank/DDBJ databases">
        <authorList>
            <person name="Mosqueda G."/>
        </authorList>
    </citation>
    <scope>SEQUENCE REVISION</scope>
</reference>
<reference key="4">
    <citation type="submission" date="2010-09" db="EMBL/GenBank/DDBJ databases">
        <title>Global regulation of food supply by Pseudomonas putida DOT-T1E.</title>
        <authorList>
            <person name="Daniels C."/>
            <person name="Godoy P."/>
            <person name="Duque E."/>
            <person name="Molina-Henares M.A."/>
            <person name="de la Torre J."/>
            <person name="Del Arco J.M."/>
            <person name="Herrera C."/>
            <person name="Segura A."/>
            <person name="Guazzaroni M.E."/>
            <person name="Ferrer M."/>
            <person name="Ramos J.L."/>
        </authorList>
    </citation>
    <scope>NUCLEOTIDE SEQUENCE [GENOMIC DNA]</scope>
    <scope>SEQUENCE REVISION</scope>
    <source>
        <strain>DOT-T1E</strain>
    </source>
</reference>
<reference key="5">
    <citation type="journal article" date="2006" name="J. Microbiol.">
        <title>Identification and expression of the cym, cmt, and tod catabolic genes from Pseudomonas putida KL47: expression of the regulatory todST genes as a factor for catabolic adaptation.</title>
        <authorList>
            <person name="Lee K."/>
            <person name="Ryu E.K."/>
            <person name="Choi K.S."/>
            <person name="Cho M.C."/>
            <person name="Jeong J.J."/>
            <person name="Choi E.N."/>
            <person name="Lee S.O."/>
            <person name="Yoon D.Y."/>
            <person name="Hwang I."/>
            <person name="Kim C.K."/>
        </authorList>
    </citation>
    <scope>NUCLEOTIDE SEQUENCE [GENOMIC DNA]</scope>
    <source>
        <strain>KL47</strain>
    </source>
</reference>
<reference key="6">
    <citation type="journal article" date="2013" name="Microb. Biotechnol.">
        <title>Metabolic potential of the organic-solvent tolerant Pseudomonas putida DOT-T1E deduced from its annotated genome.</title>
        <authorList>
            <person name="Udaondo Z."/>
            <person name="Molina L."/>
            <person name="Daniels C."/>
            <person name="Gomez M.J."/>
            <person name="Molina-Henares M.A."/>
            <person name="Matilla M.A."/>
            <person name="Roca A."/>
            <person name="Fernandez M."/>
            <person name="Duque E."/>
            <person name="Segura A."/>
            <person name="Ramos J.L."/>
        </authorList>
    </citation>
    <scope>NUCLEOTIDE SEQUENCE [LARGE SCALE GENOMIC DNA]</scope>
    <source>
        <strain>DOT-T1E</strain>
    </source>
</reference>
<keyword id="KW-0998">Cell outer membrane</keyword>
<keyword id="KW-0449">Lipoprotein</keyword>
<keyword id="KW-0472">Membrane</keyword>
<keyword id="KW-0564">Palmitate</keyword>
<keyword id="KW-0732">Signal</keyword>
<keyword id="KW-0812">Transmembrane</keyword>
<keyword id="KW-1134">Transmembrane beta strand</keyword>
<keyword id="KW-0813">Transport</keyword>
<feature type="signal peptide" evidence="1">
    <location>
        <begin position="1"/>
        <end position="16"/>
    </location>
</feature>
<feature type="chain" id="PRO_0000031005" description="Toluene efflux pump outer membrane protein TtgF">
    <location>
        <begin position="17"/>
        <end position="480"/>
    </location>
</feature>
<feature type="lipid moiety-binding region" description="N-palmitoyl cysteine" evidence="1">
    <location>
        <position position="17"/>
    </location>
</feature>
<feature type="lipid moiety-binding region" description="S-diacylglycerol cysteine" evidence="1">
    <location>
        <position position="17"/>
    </location>
</feature>
<proteinExistence type="evidence at transcript level"/>
<organism>
    <name type="scientific">Pseudomonas putida (strain DOT-T1E)</name>
    <dbReference type="NCBI Taxonomy" id="1196325"/>
    <lineage>
        <taxon>Bacteria</taxon>
        <taxon>Pseudomonadati</taxon>
        <taxon>Pseudomonadota</taxon>
        <taxon>Gammaproteobacteria</taxon>
        <taxon>Pseudomonadales</taxon>
        <taxon>Pseudomonadaceae</taxon>
        <taxon>Pseudomonas</taxon>
    </lineage>
</organism>
<evidence type="ECO:0000255" key="1">
    <source>
        <dbReference type="PROSITE-ProRule" id="PRU00303"/>
    </source>
</evidence>
<evidence type="ECO:0000269" key="2">
    <source>
    </source>
</evidence>
<evidence type="ECO:0000269" key="3">
    <source>
    </source>
</evidence>
<evidence type="ECO:0000305" key="4"/>